<evidence type="ECO:0000255" key="1">
    <source>
        <dbReference type="HAMAP-Rule" id="MF_00575"/>
    </source>
</evidence>
<feature type="chain" id="PRO_1000082333" description="UDP-2,3-diacylglucosamine hydrolase">
    <location>
        <begin position="1"/>
        <end position="243"/>
    </location>
</feature>
<feature type="binding site" evidence="1">
    <location>
        <position position="9"/>
    </location>
    <ligand>
        <name>Mn(2+)</name>
        <dbReference type="ChEBI" id="CHEBI:29035"/>
        <label>1</label>
    </ligand>
</feature>
<feature type="binding site" evidence="1">
    <location>
        <position position="11"/>
    </location>
    <ligand>
        <name>Mn(2+)</name>
        <dbReference type="ChEBI" id="CHEBI:29035"/>
        <label>1</label>
    </ligand>
</feature>
<feature type="binding site" evidence="1">
    <location>
        <position position="42"/>
    </location>
    <ligand>
        <name>Mn(2+)</name>
        <dbReference type="ChEBI" id="CHEBI:29035"/>
        <label>1</label>
    </ligand>
</feature>
<feature type="binding site" evidence="1">
    <location>
        <position position="42"/>
    </location>
    <ligand>
        <name>Mn(2+)</name>
        <dbReference type="ChEBI" id="CHEBI:29035"/>
        <label>2</label>
    </ligand>
</feature>
<feature type="binding site" evidence="1">
    <location>
        <begin position="79"/>
        <end position="80"/>
    </location>
    <ligand>
        <name>substrate</name>
    </ligand>
</feature>
<feature type="binding site" evidence="1">
    <location>
        <position position="79"/>
    </location>
    <ligand>
        <name>Mn(2+)</name>
        <dbReference type="ChEBI" id="CHEBI:29035"/>
        <label>2</label>
    </ligand>
</feature>
<feature type="binding site" evidence="1">
    <location>
        <position position="114"/>
    </location>
    <ligand>
        <name>Mn(2+)</name>
        <dbReference type="ChEBI" id="CHEBI:29035"/>
        <label>2</label>
    </ligand>
</feature>
<feature type="binding site" evidence="1">
    <location>
        <position position="122"/>
    </location>
    <ligand>
        <name>substrate</name>
    </ligand>
</feature>
<feature type="binding site" evidence="1">
    <location>
        <position position="160"/>
    </location>
    <ligand>
        <name>substrate</name>
    </ligand>
</feature>
<feature type="binding site" evidence="1">
    <location>
        <position position="164"/>
    </location>
    <ligand>
        <name>substrate</name>
    </ligand>
</feature>
<feature type="binding site" evidence="1">
    <location>
        <position position="195"/>
    </location>
    <ligand>
        <name>Mn(2+)</name>
        <dbReference type="ChEBI" id="CHEBI:29035"/>
        <label>2</label>
    </ligand>
</feature>
<feature type="binding site" evidence="1">
    <location>
        <position position="195"/>
    </location>
    <ligand>
        <name>substrate</name>
    </ligand>
</feature>
<feature type="binding site" evidence="1">
    <location>
        <position position="197"/>
    </location>
    <ligand>
        <name>Mn(2+)</name>
        <dbReference type="ChEBI" id="CHEBI:29035"/>
        <label>1</label>
    </ligand>
</feature>
<name>LPXH_COXBN</name>
<organism>
    <name type="scientific">Coxiella burnetii (strain Dugway 5J108-111)</name>
    <dbReference type="NCBI Taxonomy" id="434922"/>
    <lineage>
        <taxon>Bacteria</taxon>
        <taxon>Pseudomonadati</taxon>
        <taxon>Pseudomonadota</taxon>
        <taxon>Gammaproteobacteria</taxon>
        <taxon>Legionellales</taxon>
        <taxon>Coxiellaceae</taxon>
        <taxon>Coxiella</taxon>
    </lineage>
</organism>
<dbReference type="EC" id="3.6.1.54" evidence="1"/>
<dbReference type="EMBL" id="CP000733">
    <property type="protein sequence ID" value="ABS78243.1"/>
    <property type="molecule type" value="Genomic_DNA"/>
</dbReference>
<dbReference type="RefSeq" id="WP_011996616.1">
    <property type="nucleotide sequence ID" value="NC_009727.1"/>
</dbReference>
<dbReference type="SMR" id="A9KBJ4"/>
<dbReference type="KEGG" id="cbd:CBUD_0532"/>
<dbReference type="HOGENOM" id="CLU_074586_0_0_6"/>
<dbReference type="UniPathway" id="UPA00359">
    <property type="reaction ID" value="UER00480"/>
</dbReference>
<dbReference type="Proteomes" id="UP000008555">
    <property type="component" value="Chromosome"/>
</dbReference>
<dbReference type="GO" id="GO:0005737">
    <property type="term" value="C:cytoplasm"/>
    <property type="evidence" value="ECO:0007669"/>
    <property type="project" value="InterPro"/>
</dbReference>
<dbReference type="GO" id="GO:0019897">
    <property type="term" value="C:extrinsic component of plasma membrane"/>
    <property type="evidence" value="ECO:0007669"/>
    <property type="project" value="UniProtKB-UniRule"/>
</dbReference>
<dbReference type="GO" id="GO:0030145">
    <property type="term" value="F:manganese ion binding"/>
    <property type="evidence" value="ECO:0007669"/>
    <property type="project" value="UniProtKB-UniRule"/>
</dbReference>
<dbReference type="GO" id="GO:0008758">
    <property type="term" value="F:UDP-2,3-diacylglucosamine hydrolase activity"/>
    <property type="evidence" value="ECO:0007669"/>
    <property type="project" value="UniProtKB-UniRule"/>
</dbReference>
<dbReference type="GO" id="GO:0009245">
    <property type="term" value="P:lipid A biosynthetic process"/>
    <property type="evidence" value="ECO:0007669"/>
    <property type="project" value="UniProtKB-UniRule"/>
</dbReference>
<dbReference type="CDD" id="cd07398">
    <property type="entry name" value="MPP_YbbF-LpxH"/>
    <property type="match status" value="1"/>
</dbReference>
<dbReference type="Gene3D" id="3.60.21.10">
    <property type="match status" value="1"/>
</dbReference>
<dbReference type="HAMAP" id="MF_00575">
    <property type="entry name" value="LpxH"/>
    <property type="match status" value="1"/>
</dbReference>
<dbReference type="InterPro" id="IPR004843">
    <property type="entry name" value="Calcineurin-like_PHP_ApaH"/>
</dbReference>
<dbReference type="InterPro" id="IPR043461">
    <property type="entry name" value="LpxH-like"/>
</dbReference>
<dbReference type="InterPro" id="IPR029052">
    <property type="entry name" value="Metallo-depent_PP-like"/>
</dbReference>
<dbReference type="InterPro" id="IPR010138">
    <property type="entry name" value="UDP-diacylglucosamine_Hdrlase"/>
</dbReference>
<dbReference type="NCBIfam" id="TIGR01854">
    <property type="entry name" value="lipid_A_lpxH"/>
    <property type="match status" value="1"/>
</dbReference>
<dbReference type="NCBIfam" id="NF003743">
    <property type="entry name" value="PRK05340.1"/>
    <property type="match status" value="1"/>
</dbReference>
<dbReference type="PANTHER" id="PTHR34990:SF1">
    <property type="entry name" value="UDP-2,3-DIACYLGLUCOSAMINE HYDROLASE"/>
    <property type="match status" value="1"/>
</dbReference>
<dbReference type="PANTHER" id="PTHR34990">
    <property type="entry name" value="UDP-2,3-DIACYLGLUCOSAMINE HYDROLASE-RELATED"/>
    <property type="match status" value="1"/>
</dbReference>
<dbReference type="Pfam" id="PF00149">
    <property type="entry name" value="Metallophos"/>
    <property type="match status" value="1"/>
</dbReference>
<dbReference type="SUPFAM" id="SSF56300">
    <property type="entry name" value="Metallo-dependent phosphatases"/>
    <property type="match status" value="1"/>
</dbReference>
<gene>
    <name evidence="1" type="primary">lpxH</name>
    <name type="ordered locus">CBUD_0532</name>
</gene>
<reference key="1">
    <citation type="journal article" date="2009" name="Infect. Immun.">
        <title>Comparative genomics reveal extensive transposon-mediated genomic plasticity and diversity among potential effector proteins within the genus Coxiella.</title>
        <authorList>
            <person name="Beare P.A."/>
            <person name="Unsworth N."/>
            <person name="Andoh M."/>
            <person name="Voth D.E."/>
            <person name="Omsland A."/>
            <person name="Gilk S.D."/>
            <person name="Williams K.P."/>
            <person name="Sobral B.W."/>
            <person name="Kupko J.J. III"/>
            <person name="Porcella S.F."/>
            <person name="Samuel J.E."/>
            <person name="Heinzen R.A."/>
        </authorList>
    </citation>
    <scope>NUCLEOTIDE SEQUENCE [LARGE SCALE GENOMIC DNA]</scope>
    <source>
        <strain>Dugway 5J108-111</strain>
    </source>
</reference>
<keyword id="KW-0997">Cell inner membrane</keyword>
<keyword id="KW-1003">Cell membrane</keyword>
<keyword id="KW-0378">Hydrolase</keyword>
<keyword id="KW-0441">Lipid A biosynthesis</keyword>
<keyword id="KW-0444">Lipid biosynthesis</keyword>
<keyword id="KW-0443">Lipid metabolism</keyword>
<keyword id="KW-0464">Manganese</keyword>
<keyword id="KW-0472">Membrane</keyword>
<keyword id="KW-0479">Metal-binding</keyword>
<sequence length="243" mass="28233">MRHTLFISDLHLEEETPSITAHFLYFLKHQAPKADAIYILGDFFEAWIGDDNQTPFNRKIIESLQTLARTKPTYFMRGNRDFLIGQRFAAMTGVSLLEDPSVIQLYNKPVLLMHGDSLCTLDHKHQAYRRKIMKPWVQKLMLSLPLSLRRKLAKKFREQSRRHNRTLSYGIKDVTPEEVNRVMKEQNVELLIHGHTHRPAIHDLTINGNPTKRIVLGAWHHGGSVLRYAQDGSFELQAFKIDL</sequence>
<protein>
    <recommendedName>
        <fullName evidence="1">UDP-2,3-diacylglucosamine hydrolase</fullName>
        <ecNumber evidence="1">3.6.1.54</ecNumber>
    </recommendedName>
    <alternativeName>
        <fullName evidence="1">UDP-2,3-diacylglucosamine diphosphatase</fullName>
    </alternativeName>
</protein>
<accession>A9KBJ4</accession>
<proteinExistence type="inferred from homology"/>
<comment type="function">
    <text evidence="1">Hydrolyzes the pyrophosphate bond of UDP-2,3-diacylglucosamine to yield 2,3-diacylglucosamine 1-phosphate (lipid X) and UMP by catalyzing the attack of water at the alpha-P atom. Involved in the biosynthesis of lipid A, a phosphorylated glycolipid that anchors the lipopolysaccharide to the outer membrane of the cell.</text>
</comment>
<comment type="catalytic activity">
    <reaction evidence="1">
        <text>UDP-2-N,3-O-bis[(3R)-3-hydroxytetradecanoyl]-alpha-D-glucosamine + H2O = 2-N,3-O-bis[(3R)-3-hydroxytetradecanoyl]-alpha-D-glucosaminyl 1-phosphate + UMP + 2 H(+)</text>
        <dbReference type="Rhea" id="RHEA:25213"/>
        <dbReference type="ChEBI" id="CHEBI:15377"/>
        <dbReference type="ChEBI" id="CHEBI:15378"/>
        <dbReference type="ChEBI" id="CHEBI:57865"/>
        <dbReference type="ChEBI" id="CHEBI:57957"/>
        <dbReference type="ChEBI" id="CHEBI:78847"/>
        <dbReference type="EC" id="3.6.1.54"/>
    </reaction>
</comment>
<comment type="cofactor">
    <cofactor evidence="1">
        <name>Mn(2+)</name>
        <dbReference type="ChEBI" id="CHEBI:29035"/>
    </cofactor>
    <text evidence="1">Binds 2 Mn(2+) ions per subunit in a binuclear metal center.</text>
</comment>
<comment type="pathway">
    <text evidence="1">Glycolipid biosynthesis; lipid IV(A) biosynthesis; lipid IV(A) from (3R)-3-hydroxytetradecanoyl-[acyl-carrier-protein] and UDP-N-acetyl-alpha-D-glucosamine: step 4/6.</text>
</comment>
<comment type="subcellular location">
    <subcellularLocation>
        <location evidence="1">Cell inner membrane</location>
        <topology evidence="1">Peripheral membrane protein</topology>
        <orientation evidence="1">Cytoplasmic side</orientation>
    </subcellularLocation>
</comment>
<comment type="similarity">
    <text evidence="1">Belongs to the LpxH family.</text>
</comment>